<protein>
    <recommendedName>
        <fullName evidence="1">Nicotinamide-nucleotide adenylyltransferase</fullName>
        <ecNumber evidence="1 2 4 7">2.7.7.1</ecNumber>
        <ecNumber evidence="1">2.7.7.18</ecNumber>
    </recommendedName>
    <alternativeName>
        <fullName evidence="12">Nicotinamide mononucleotide adenylyltransferase</fullName>
        <shortName evidence="12">dNmnat</shortName>
    </alternativeName>
</protein>
<dbReference type="EC" id="2.7.7.1" evidence="1 2 4 7"/>
<dbReference type="EC" id="2.7.7.18" evidence="1"/>
<dbReference type="EMBL" id="AE014297">
    <property type="protein sequence ID" value="AAF56373.4"/>
    <property type="molecule type" value="Genomic_DNA"/>
</dbReference>
<dbReference type="EMBL" id="AE014297">
    <property type="protein sequence ID" value="AAN14028.2"/>
    <property type="molecule type" value="Genomic_DNA"/>
</dbReference>
<dbReference type="EMBL" id="AE014297">
    <property type="protein sequence ID" value="AGB96322.1"/>
    <property type="molecule type" value="Genomic_DNA"/>
</dbReference>
<dbReference type="EMBL" id="AE014297">
    <property type="protein sequence ID" value="QCD25207.1"/>
    <property type="molecule type" value="Genomic_DNA"/>
</dbReference>
<dbReference type="EMBL" id="AY089411">
    <property type="protein sequence ID" value="AAL90149.1"/>
    <property type="molecule type" value="mRNA"/>
</dbReference>
<dbReference type="EMBL" id="BT030750">
    <property type="protein sequence ID" value="ABV82132.1"/>
    <property type="molecule type" value="mRNA"/>
</dbReference>
<dbReference type="RefSeq" id="NP_651315.2">
    <property type="nucleotide sequence ID" value="NM_143058.1"/>
</dbReference>
<dbReference type="SMR" id="Q9VC03"/>
<dbReference type="FunCoup" id="Q9VC03">
    <property type="interactions" value="687"/>
</dbReference>
<dbReference type="IntAct" id="Q9VC03">
    <property type="interactions" value="2"/>
</dbReference>
<dbReference type="STRING" id="7227.FBpp0084124"/>
<dbReference type="PaxDb" id="7227-FBpp0084124"/>
<dbReference type="DNASU" id="42987"/>
<dbReference type="EnsemblMetazoa" id="FBtr0084749">
    <property type="protein sequence ID" value="FBpp0084124"/>
    <property type="gene ID" value="FBgn0039254"/>
</dbReference>
<dbReference type="GeneID" id="42987"/>
<dbReference type="KEGG" id="dme:Dmel_CG13645"/>
<dbReference type="UCSC" id="CG13645-RA">
    <property type="organism name" value="d. melanogaster"/>
</dbReference>
<dbReference type="AGR" id="FB:FBgn0039254"/>
<dbReference type="CTD" id="42987"/>
<dbReference type="FlyBase" id="FBgn0039254">
    <property type="gene designation" value="Nmnat"/>
</dbReference>
<dbReference type="VEuPathDB" id="VectorBase:FBgn0039254"/>
<dbReference type="eggNOG" id="KOG3199">
    <property type="taxonomic scope" value="Eukaryota"/>
</dbReference>
<dbReference type="GeneTree" id="ENSGT00950000183179"/>
<dbReference type="HOGENOM" id="CLU_033366_3_0_1"/>
<dbReference type="OMA" id="HFDYELN"/>
<dbReference type="OrthoDB" id="422187at2759"/>
<dbReference type="BRENDA" id="2.7.7.1">
    <property type="organism ID" value="1994"/>
</dbReference>
<dbReference type="BRENDA" id="2.7.7.18">
    <property type="organism ID" value="1994"/>
</dbReference>
<dbReference type="Reactome" id="R-DME-196807">
    <property type="pathway name" value="Nicotinate metabolism"/>
</dbReference>
<dbReference type="UniPathway" id="UPA00253">
    <property type="reaction ID" value="UER00332"/>
</dbReference>
<dbReference type="UniPathway" id="UPA00253">
    <property type="reaction ID" value="UER00600"/>
</dbReference>
<dbReference type="BioGRID-ORCS" id="42987">
    <property type="hits" value="1 hit in 3 CRISPR screens"/>
</dbReference>
<dbReference type="Proteomes" id="UP000000803">
    <property type="component" value="Chromosome 3R"/>
</dbReference>
<dbReference type="Bgee" id="FBgn0039254">
    <property type="expression patterns" value="Expressed in outer photoreceptor cell (Drosophila) in insect head and 118 other cell types or tissues"/>
</dbReference>
<dbReference type="ExpressionAtlas" id="Q7KS06">
    <property type="expression patterns" value="baseline and differential"/>
</dbReference>
<dbReference type="GO" id="GO:0005737">
    <property type="term" value="C:cytoplasm"/>
    <property type="evidence" value="ECO:0000314"/>
    <property type="project" value="FlyBase"/>
</dbReference>
<dbReference type="GO" id="GO:0005739">
    <property type="term" value="C:mitochondrion"/>
    <property type="evidence" value="ECO:0000250"/>
    <property type="project" value="FlyBase"/>
</dbReference>
<dbReference type="GO" id="GO:0031594">
    <property type="term" value="C:neuromuscular junction"/>
    <property type="evidence" value="ECO:0000314"/>
    <property type="project" value="FlyBase"/>
</dbReference>
<dbReference type="GO" id="GO:0043025">
    <property type="term" value="C:neuronal cell body"/>
    <property type="evidence" value="ECO:0000314"/>
    <property type="project" value="FlyBase"/>
</dbReference>
<dbReference type="GO" id="GO:0048786">
    <property type="term" value="C:presynaptic active zone"/>
    <property type="evidence" value="ECO:0000315"/>
    <property type="project" value="FlyBase"/>
</dbReference>
<dbReference type="GO" id="GO:0005524">
    <property type="term" value="F:ATP binding"/>
    <property type="evidence" value="ECO:0007669"/>
    <property type="project" value="UniProtKB-KW"/>
</dbReference>
<dbReference type="GO" id="GO:0000309">
    <property type="term" value="F:nicotinamide-nucleotide adenylyltransferase activity"/>
    <property type="evidence" value="ECO:0000314"/>
    <property type="project" value="FlyBase"/>
</dbReference>
<dbReference type="GO" id="GO:0004515">
    <property type="term" value="F:nicotinate-nucleotide adenylyltransferase activity"/>
    <property type="evidence" value="ECO:0000250"/>
    <property type="project" value="FlyBase"/>
</dbReference>
<dbReference type="GO" id="GO:0051082">
    <property type="term" value="F:unfolded protein binding"/>
    <property type="evidence" value="ECO:0000314"/>
    <property type="project" value="FlyBase"/>
</dbReference>
<dbReference type="GO" id="GO:0009435">
    <property type="term" value="P:NAD biosynthetic process"/>
    <property type="evidence" value="ECO:0000318"/>
    <property type="project" value="GO_Central"/>
</dbReference>
<dbReference type="GO" id="GO:0034355">
    <property type="term" value="P:NAD biosynthetic process via the salvage pathway"/>
    <property type="evidence" value="ECO:0000315"/>
    <property type="project" value="FlyBase"/>
</dbReference>
<dbReference type="GO" id="GO:1900074">
    <property type="term" value="P:negative regulation of neuromuscular synaptic transmission"/>
    <property type="evidence" value="ECO:0000314"/>
    <property type="project" value="FlyBase"/>
</dbReference>
<dbReference type="GO" id="GO:1990535">
    <property type="term" value="P:neuron projection maintenance"/>
    <property type="evidence" value="ECO:0000315"/>
    <property type="project" value="FlyBase"/>
</dbReference>
<dbReference type="GO" id="GO:0045494">
    <property type="term" value="P:photoreceptor cell maintenance"/>
    <property type="evidence" value="ECO:0000315"/>
    <property type="project" value="FlyBase"/>
</dbReference>
<dbReference type="CDD" id="cd09286">
    <property type="entry name" value="NMNAT_Eukarya"/>
    <property type="match status" value="1"/>
</dbReference>
<dbReference type="FunFam" id="3.40.50.620:FF:000191">
    <property type="entry name" value="Nicotinamide-nucleotide adenylyltransferase"/>
    <property type="match status" value="1"/>
</dbReference>
<dbReference type="Gene3D" id="3.40.50.620">
    <property type="entry name" value="HUPs"/>
    <property type="match status" value="1"/>
</dbReference>
<dbReference type="InterPro" id="IPR004821">
    <property type="entry name" value="Cyt_trans-like"/>
</dbReference>
<dbReference type="InterPro" id="IPR051182">
    <property type="entry name" value="Euk_NMN_adenylyltrnsfrase"/>
</dbReference>
<dbReference type="InterPro" id="IPR005248">
    <property type="entry name" value="NadD/NMNAT"/>
</dbReference>
<dbReference type="InterPro" id="IPR045094">
    <property type="entry name" value="NMNAT_euk"/>
</dbReference>
<dbReference type="InterPro" id="IPR014729">
    <property type="entry name" value="Rossmann-like_a/b/a_fold"/>
</dbReference>
<dbReference type="NCBIfam" id="TIGR00482">
    <property type="entry name" value="nicotinate (nicotinamide) nucleotide adenylyltransferase"/>
    <property type="match status" value="1"/>
</dbReference>
<dbReference type="PANTHER" id="PTHR12039">
    <property type="entry name" value="NICOTINAMIDE MONONUCLEOTIDE ADENYLYLTRANSFERASE"/>
    <property type="match status" value="1"/>
</dbReference>
<dbReference type="PANTHER" id="PTHR12039:SF0">
    <property type="entry name" value="NICOTINAMIDE-NUCLEOTIDE ADENYLYLTRANSFERASE"/>
    <property type="match status" value="1"/>
</dbReference>
<dbReference type="Pfam" id="PF01467">
    <property type="entry name" value="CTP_transf_like"/>
    <property type="match status" value="1"/>
</dbReference>
<dbReference type="SUPFAM" id="SSF52374">
    <property type="entry name" value="Nucleotidylyl transferase"/>
    <property type="match status" value="1"/>
</dbReference>
<keyword id="KW-0024">Alternative initiation</keyword>
<keyword id="KW-0025">Alternative splicing</keyword>
<keyword id="KW-0067">ATP-binding</keyword>
<keyword id="KW-0966">Cell projection</keyword>
<keyword id="KW-0963">Cytoplasm</keyword>
<keyword id="KW-0520">NAD</keyword>
<keyword id="KW-0523">Neurodegeneration</keyword>
<keyword id="KW-0547">Nucleotide-binding</keyword>
<keyword id="KW-0548">Nucleotidyltransferase</keyword>
<keyword id="KW-0539">Nucleus</keyword>
<keyword id="KW-0662">Pyridine nucleotide biosynthesis</keyword>
<keyword id="KW-1185">Reference proteome</keyword>
<keyword id="KW-0770">Synapse</keyword>
<keyword id="KW-0808">Transferase</keyword>
<reference evidence="13" key="1">
    <citation type="journal article" date="2000" name="Science">
        <title>The genome sequence of Drosophila melanogaster.</title>
        <authorList>
            <person name="Adams M.D."/>
            <person name="Celniker S.E."/>
            <person name="Holt R.A."/>
            <person name="Evans C.A."/>
            <person name="Gocayne J.D."/>
            <person name="Amanatides P.G."/>
            <person name="Scherer S.E."/>
            <person name="Li P.W."/>
            <person name="Hoskins R.A."/>
            <person name="Galle R.F."/>
            <person name="George R.A."/>
            <person name="Lewis S.E."/>
            <person name="Richards S."/>
            <person name="Ashburner M."/>
            <person name="Henderson S.N."/>
            <person name="Sutton G.G."/>
            <person name="Wortman J.R."/>
            <person name="Yandell M.D."/>
            <person name="Zhang Q."/>
            <person name="Chen L.X."/>
            <person name="Brandon R.C."/>
            <person name="Rogers Y.-H.C."/>
            <person name="Blazej R.G."/>
            <person name="Champe M."/>
            <person name="Pfeiffer B.D."/>
            <person name="Wan K.H."/>
            <person name="Doyle C."/>
            <person name="Baxter E.G."/>
            <person name="Helt G."/>
            <person name="Nelson C.R."/>
            <person name="Miklos G.L.G."/>
            <person name="Abril J.F."/>
            <person name="Agbayani A."/>
            <person name="An H.-J."/>
            <person name="Andrews-Pfannkoch C."/>
            <person name="Baldwin D."/>
            <person name="Ballew R.M."/>
            <person name="Basu A."/>
            <person name="Baxendale J."/>
            <person name="Bayraktaroglu L."/>
            <person name="Beasley E.M."/>
            <person name="Beeson K.Y."/>
            <person name="Benos P.V."/>
            <person name="Berman B.P."/>
            <person name="Bhandari D."/>
            <person name="Bolshakov S."/>
            <person name="Borkova D."/>
            <person name="Botchan M.R."/>
            <person name="Bouck J."/>
            <person name="Brokstein P."/>
            <person name="Brottier P."/>
            <person name="Burtis K.C."/>
            <person name="Busam D.A."/>
            <person name="Butler H."/>
            <person name="Cadieu E."/>
            <person name="Center A."/>
            <person name="Chandra I."/>
            <person name="Cherry J.M."/>
            <person name="Cawley S."/>
            <person name="Dahlke C."/>
            <person name="Davenport L.B."/>
            <person name="Davies P."/>
            <person name="de Pablos B."/>
            <person name="Delcher A."/>
            <person name="Deng Z."/>
            <person name="Mays A.D."/>
            <person name="Dew I."/>
            <person name="Dietz S.M."/>
            <person name="Dodson K."/>
            <person name="Doup L.E."/>
            <person name="Downes M."/>
            <person name="Dugan-Rocha S."/>
            <person name="Dunkov B.C."/>
            <person name="Dunn P."/>
            <person name="Durbin K.J."/>
            <person name="Evangelista C.C."/>
            <person name="Ferraz C."/>
            <person name="Ferriera S."/>
            <person name="Fleischmann W."/>
            <person name="Fosler C."/>
            <person name="Gabrielian A.E."/>
            <person name="Garg N.S."/>
            <person name="Gelbart W.M."/>
            <person name="Glasser K."/>
            <person name="Glodek A."/>
            <person name="Gong F."/>
            <person name="Gorrell J.H."/>
            <person name="Gu Z."/>
            <person name="Guan P."/>
            <person name="Harris M."/>
            <person name="Harris N.L."/>
            <person name="Harvey D.A."/>
            <person name="Heiman T.J."/>
            <person name="Hernandez J.R."/>
            <person name="Houck J."/>
            <person name="Hostin D."/>
            <person name="Houston K.A."/>
            <person name="Howland T.J."/>
            <person name="Wei M.-H."/>
            <person name="Ibegwam C."/>
            <person name="Jalali M."/>
            <person name="Kalush F."/>
            <person name="Karpen G.H."/>
            <person name="Ke Z."/>
            <person name="Kennison J.A."/>
            <person name="Ketchum K.A."/>
            <person name="Kimmel B.E."/>
            <person name="Kodira C.D."/>
            <person name="Kraft C.L."/>
            <person name="Kravitz S."/>
            <person name="Kulp D."/>
            <person name="Lai Z."/>
            <person name="Lasko P."/>
            <person name="Lei Y."/>
            <person name="Levitsky A.A."/>
            <person name="Li J.H."/>
            <person name="Li Z."/>
            <person name="Liang Y."/>
            <person name="Lin X."/>
            <person name="Liu X."/>
            <person name="Mattei B."/>
            <person name="McIntosh T.C."/>
            <person name="McLeod M.P."/>
            <person name="McPherson D."/>
            <person name="Merkulov G."/>
            <person name="Milshina N.V."/>
            <person name="Mobarry C."/>
            <person name="Morris J."/>
            <person name="Moshrefi A."/>
            <person name="Mount S.M."/>
            <person name="Moy M."/>
            <person name="Murphy B."/>
            <person name="Murphy L."/>
            <person name="Muzny D.M."/>
            <person name="Nelson D.L."/>
            <person name="Nelson D.R."/>
            <person name="Nelson K.A."/>
            <person name="Nixon K."/>
            <person name="Nusskern D.R."/>
            <person name="Pacleb J.M."/>
            <person name="Palazzolo M."/>
            <person name="Pittman G.S."/>
            <person name="Pan S."/>
            <person name="Pollard J."/>
            <person name="Puri V."/>
            <person name="Reese M.G."/>
            <person name="Reinert K."/>
            <person name="Remington K."/>
            <person name="Saunders R.D.C."/>
            <person name="Scheeler F."/>
            <person name="Shen H."/>
            <person name="Shue B.C."/>
            <person name="Siden-Kiamos I."/>
            <person name="Simpson M."/>
            <person name="Skupski M.P."/>
            <person name="Smith T.J."/>
            <person name="Spier E."/>
            <person name="Spradling A.C."/>
            <person name="Stapleton M."/>
            <person name="Strong R."/>
            <person name="Sun E."/>
            <person name="Svirskas R."/>
            <person name="Tector C."/>
            <person name="Turner R."/>
            <person name="Venter E."/>
            <person name="Wang A.H."/>
            <person name="Wang X."/>
            <person name="Wang Z.-Y."/>
            <person name="Wassarman D.A."/>
            <person name="Weinstock G.M."/>
            <person name="Weissenbach J."/>
            <person name="Williams S.M."/>
            <person name="Woodage T."/>
            <person name="Worley K.C."/>
            <person name="Wu D."/>
            <person name="Yang S."/>
            <person name="Yao Q.A."/>
            <person name="Ye J."/>
            <person name="Yeh R.-F."/>
            <person name="Zaveri J.S."/>
            <person name="Zhan M."/>
            <person name="Zhang G."/>
            <person name="Zhao Q."/>
            <person name="Zheng L."/>
            <person name="Zheng X.H."/>
            <person name="Zhong F.N."/>
            <person name="Zhong W."/>
            <person name="Zhou X."/>
            <person name="Zhu S.C."/>
            <person name="Zhu X."/>
            <person name="Smith H.O."/>
            <person name="Gibbs R.A."/>
            <person name="Myers E.W."/>
            <person name="Rubin G.M."/>
            <person name="Venter J.C."/>
        </authorList>
    </citation>
    <scope>NUCLEOTIDE SEQUENCE [LARGE SCALE GENOMIC DNA]</scope>
    <source>
        <strain evidence="13">Berkeley</strain>
    </source>
</reference>
<reference evidence="13" key="2">
    <citation type="journal article" date="2002" name="Genome Biol.">
        <title>Annotation of the Drosophila melanogaster euchromatic genome: a systematic review.</title>
        <authorList>
            <person name="Misra S."/>
            <person name="Crosby M.A."/>
            <person name="Mungall C.J."/>
            <person name="Matthews B.B."/>
            <person name="Campbell K.S."/>
            <person name="Hradecky P."/>
            <person name="Huang Y."/>
            <person name="Kaminker J.S."/>
            <person name="Millburn G.H."/>
            <person name="Prochnik S.E."/>
            <person name="Smith C.D."/>
            <person name="Tupy J.L."/>
            <person name="Whitfield E.J."/>
            <person name="Bayraktaroglu L."/>
            <person name="Berman B.P."/>
            <person name="Bettencourt B.R."/>
            <person name="Celniker S.E."/>
            <person name="de Grey A.D.N.J."/>
            <person name="Drysdale R.A."/>
            <person name="Harris N.L."/>
            <person name="Richter J."/>
            <person name="Russo S."/>
            <person name="Schroeder A.J."/>
            <person name="Shu S.Q."/>
            <person name="Stapleton M."/>
            <person name="Yamada C."/>
            <person name="Ashburner M."/>
            <person name="Gelbart W.M."/>
            <person name="Rubin G.M."/>
            <person name="Lewis S.E."/>
        </authorList>
    </citation>
    <scope>GENOME REANNOTATION</scope>
    <source>
        <strain evidence="13">Berkeley</strain>
    </source>
</reference>
<reference evidence="10" key="3">
    <citation type="journal article" date="2002" name="Genome Biol.">
        <title>A Drosophila full-length cDNA resource.</title>
        <authorList>
            <person name="Stapleton M."/>
            <person name="Carlson J.W."/>
            <person name="Brokstein P."/>
            <person name="Yu C."/>
            <person name="Champe M."/>
            <person name="George R.A."/>
            <person name="Guarin H."/>
            <person name="Kronmiller B."/>
            <person name="Pacleb J.M."/>
            <person name="Park S."/>
            <person name="Wan K.H."/>
            <person name="Rubin G.M."/>
            <person name="Celniker S.E."/>
        </authorList>
    </citation>
    <scope>NUCLEOTIDE SEQUENCE [LARGE SCALE MRNA] (ISOFORM D)</scope>
    <source>
        <strain evidence="10">Berkeley</strain>
        <tissue evidence="10">Testis</tissue>
    </source>
</reference>
<reference evidence="11" key="4">
    <citation type="submission" date="2007-10" db="EMBL/GenBank/DDBJ databases">
        <authorList>
            <person name="Stapleton M."/>
            <person name="Carlson J."/>
            <person name="Frise E."/>
            <person name="Kapadia B."/>
            <person name="Park S."/>
            <person name="Wan K."/>
            <person name="Yu C."/>
            <person name="Celniker S."/>
        </authorList>
    </citation>
    <scope>NUCLEOTIDE SEQUENCE [LARGE SCALE MRNA] (ISOFORM A)</scope>
    <source>
        <tissue evidence="11">Testis</tissue>
    </source>
</reference>
<reference evidence="9" key="5">
    <citation type="journal article" date="2006" name="PLoS Biol.">
        <title>Drosophila NMNAT maintains neural integrity independent of its NAD synthesis activity.</title>
        <authorList>
            <person name="Zhai R.G."/>
            <person name="Cao Y."/>
            <person name="Hiesinger P.R."/>
            <person name="Zhou Y."/>
            <person name="Mehta S.Q."/>
            <person name="Schulze K.L."/>
            <person name="Verstreken P."/>
            <person name="Bellen H.J."/>
        </authorList>
    </citation>
    <scope>FUNCTION</scope>
    <scope>CATALYTIC ACTIVITY</scope>
    <scope>SUBCELLULAR LOCATION</scope>
    <scope>TISSUE SPECIFICITY</scope>
    <scope>DISRUPTION PHENOTYPE</scope>
    <scope>MUTAGENESIS OF HIS-61; TRP-129 AND ARG-255</scope>
</reference>
<reference evidence="9" key="6">
    <citation type="journal article" date="2008" name="Nature">
        <title>NAD synthase NMNAT acts as a chaperone to protect against neurodegeneration.</title>
        <authorList>
            <person name="Zhai R.G."/>
            <person name="Zhang F."/>
            <person name="Hiesinger P.R."/>
            <person name="Cao Y."/>
            <person name="Haueter C.M."/>
            <person name="Bellen H.J."/>
        </authorList>
    </citation>
    <scope>FUNCTION</scope>
    <scope>INDUCTION BY PROTEOTOXIC STRESS</scope>
    <scope>DOMAIN</scope>
    <scope>MUTAGENESIS OF HIS-61; TRP-129 AND ARG-255</scope>
</reference>
<reference evidence="9" key="7">
    <citation type="journal article" date="2009" name="J. Neurosci.">
        <title>Nicotinamide mononucleotide adenylyl transferase-mediated axonal protection requires enzymatic activity but not increased levels of neuronal nicotinamide adenine dinucleotide.</title>
        <authorList>
            <person name="Sasaki Y."/>
            <person name="Vohra B.P."/>
            <person name="Lund F.E."/>
            <person name="Milbrandt J."/>
        </authorList>
    </citation>
    <scope>FUNCTION</scope>
    <scope>CATALYTIC ACTIVITY</scope>
    <scope>SUBCELLULAR LOCATION</scope>
</reference>
<reference evidence="9" key="8">
    <citation type="journal article" date="2011" name="Mol. Cell. Neurosci.">
        <title>Nmnat exerts neuroprotective effects in dendrites and axons.</title>
        <authorList>
            <person name="Wen Y."/>
            <person name="Parrish J.Z."/>
            <person name="He R."/>
            <person name="Zhai R.G."/>
            <person name="Kim M.D."/>
        </authorList>
    </citation>
    <scope>FUNCTION</scope>
    <scope>DISRUPTION PHENOTYPE</scope>
    <scope>MUTAGENESIS OF TRP-129 AND ARG-255</scope>
</reference>
<reference evidence="9" key="9">
    <citation type="journal article" date="2012" name="Curr. Biol.">
        <title>A novel Drosophila model of nerve injury reveals an essential role of Nmnat in maintaining axonal integrity.</title>
        <authorList>
            <person name="Fang Y."/>
            <person name="Soares L."/>
            <person name="Teng X."/>
            <person name="Geary M."/>
            <person name="Bonini N.M."/>
        </authorList>
    </citation>
    <scope>FUNCTION</scope>
    <scope>DISRUPTION PHENOTYPE</scope>
</reference>
<reference evidence="9" key="10">
    <citation type="journal article" date="2015" name="Nat. Commun.">
        <title>Alternative splicing of Drosophila Nmnat functions as a switch to enhance neuroprotection under stress.</title>
        <authorList>
            <person name="Ruan K."/>
            <person name="Zhu Y."/>
            <person name="Li C."/>
            <person name="Brazill J.M."/>
            <person name="Zhai R.G."/>
        </authorList>
    </citation>
    <scope>FUNCTION</scope>
    <scope>CATALYTIC ACTIVITY</scope>
    <scope>SUBCELLULAR LOCATION</scope>
    <scope>ALTERNATIVE SPLICING</scope>
    <scope>INDUCTION BY HEAT SHOCK AND PROTEOTOXIC STRESS</scope>
    <scope>NUCLEAR LOCALISAION SIGNAL</scope>
    <scope>MUTAGENESIS OF LYS-380</scope>
</reference>
<name>NMNA_DROME</name>
<evidence type="ECO:0000255" key="1">
    <source>
        <dbReference type="RuleBase" id="RU362021"/>
    </source>
</evidence>
<evidence type="ECO:0000269" key="2">
    <source>
    </source>
</evidence>
<evidence type="ECO:0000269" key="3">
    <source>
    </source>
</evidence>
<evidence type="ECO:0000269" key="4">
    <source>
    </source>
</evidence>
<evidence type="ECO:0000269" key="5">
    <source>
    </source>
</evidence>
<evidence type="ECO:0000269" key="6">
    <source>
    </source>
</evidence>
<evidence type="ECO:0000269" key="7">
    <source>
    </source>
</evidence>
<evidence type="ECO:0000303" key="8">
    <source>
    </source>
</evidence>
<evidence type="ECO:0000305" key="9"/>
<evidence type="ECO:0000312" key="10">
    <source>
        <dbReference type="EMBL" id="AAL90149.1"/>
    </source>
</evidence>
<evidence type="ECO:0000312" key="11">
    <source>
        <dbReference type="EMBL" id="ABV82132.1"/>
    </source>
</evidence>
<evidence type="ECO:0000312" key="12">
    <source>
        <dbReference type="FlyBase" id="FBgn0039254"/>
    </source>
</evidence>
<evidence type="ECO:0000312" key="13">
    <source>
        <dbReference type="Proteomes" id="UP000000803"/>
    </source>
</evidence>
<comment type="function">
    <text evidence="2 3 4 5 6">Catalyzes the formation of NAD(+) from nicotinamide mononucleotide (NMN) and ATP (PubMed:17132048, PubMed:19403820). Essential for viability (PubMed:17132048). Stress-response chaperone protein that prevents toxic aggregation of proteins and promotes proteasome-mediated degradation of misfolded proteins; this is independent of its NAD(+) synthesis activity (PubMed:18344983). Neuroprotective in response to toxic protein aggregation, for example by overexpressed Atx-1/ataxin-1 (PubMed:18344983). Required for maintenance and integrity of mature neurons, protecting them from neuronal activity-induced neurodegeneration (PubMed:17132048, PubMed:19403820). Required for the maintenance of axonal and dendritic integrity in both central and peripheral neurons (PubMed:21596138, PubMed:22425156). Chaperone function and neuroprotective roles are largely independent of NAD(+) synthesis activity (PubMed:17132048, PubMed:18344983, PubMed:21596138).</text>
</comment>
<comment type="function">
    <molecule>Isoform C</molecule>
    <text evidence="7">Catalyzes the formation of NAD(+) from nicotinamide mononucleotide (NMN) and ATP (PubMed:26616331). Has, or stimulates, chaperone holdase activity but not refoldase activity (PubMed:26616331). Does not have neuroprotective properties and may stimulate apoptosis and neurodegeneration in response to toxic protein aggregates (PubMed:26616331).</text>
</comment>
<comment type="function">
    <molecule>Isoform D</molecule>
    <text evidence="7">Catalyzes the formation of NAD(+) from nicotinamide mononucleotide (NMN) and ATP (PubMed:26616331). Has, or stimulates, chaperone holdase and refoldase activity (PubMed:26616331). Neuroprotective and reduces the toxic load of protein aggregates, preventing apoptosis and neurodegeneration (PubMed:26616331). Promotes clearance of nuclear misfolded protein aggregates (PubMed:26616331).</text>
</comment>
<comment type="catalytic activity">
    <reaction evidence="1 2 4 7">
        <text>beta-nicotinamide D-ribonucleotide + ATP + H(+) = diphosphate + NAD(+)</text>
        <dbReference type="Rhea" id="RHEA:21360"/>
        <dbReference type="ChEBI" id="CHEBI:14649"/>
        <dbReference type="ChEBI" id="CHEBI:15378"/>
        <dbReference type="ChEBI" id="CHEBI:30616"/>
        <dbReference type="ChEBI" id="CHEBI:33019"/>
        <dbReference type="ChEBI" id="CHEBI:57540"/>
        <dbReference type="EC" id="2.7.7.1"/>
    </reaction>
    <physiologicalReaction direction="left-to-right" evidence="4 7">
        <dbReference type="Rhea" id="RHEA:21361"/>
    </physiologicalReaction>
</comment>
<comment type="catalytic activity">
    <reaction evidence="1">
        <text>nicotinate beta-D-ribonucleotide + ATP + H(+) = deamido-NAD(+) + diphosphate</text>
        <dbReference type="Rhea" id="RHEA:22860"/>
        <dbReference type="ChEBI" id="CHEBI:15378"/>
        <dbReference type="ChEBI" id="CHEBI:30616"/>
        <dbReference type="ChEBI" id="CHEBI:33019"/>
        <dbReference type="ChEBI" id="CHEBI:57502"/>
        <dbReference type="ChEBI" id="CHEBI:58437"/>
        <dbReference type="EC" id="2.7.7.18"/>
    </reaction>
</comment>
<comment type="pathway">
    <text evidence="1 2 4 7">Cofactor biosynthesis; NAD(+) biosynthesis; NAD(+) from nicotinamide D-ribonucleotide: step 1/1.</text>
</comment>
<comment type="pathway">
    <text evidence="9">Cofactor biosynthesis; NAD(+) biosynthesis; deamido-NAD(+) from nicotinate D-ribonucleotide: step 1/1.</text>
</comment>
<comment type="subcellular location">
    <subcellularLocation>
        <location evidence="2">Nucleus</location>
    </subcellularLocation>
    <subcellularLocation>
        <location evidence="2 4">Cytoplasm</location>
    </subcellularLocation>
    <subcellularLocation>
        <location evidence="2">Presynaptic active zone</location>
    </subcellularLocation>
    <text evidence="2 4">Localizes predominantly to the cytoplasm (PubMed:19403820). Present in neuronal and muscle cell nuclei (PubMed:17132048). Punctate localization at the presynaptic active zone colocalizing with brp/nc82 active zone marker in photoreceptors and other neurons (PubMed:17132048).</text>
</comment>
<comment type="subcellular location">
    <molecule>Isoform C</molecule>
    <subcellularLocation>
        <location evidence="7">Nucleus</location>
    </subcellularLocation>
    <text evidence="7">Associates with nuclear misfolded protein aggregates.</text>
</comment>
<comment type="subcellular location">
    <molecule>Isoform D</molecule>
    <subcellularLocation>
        <location evidence="7">Cytoplasm</location>
    </subcellularLocation>
</comment>
<comment type="alternative products">
    <event type="alternative splicing"/>
    <event type="alternative initiation"/>
    <isoform>
        <id>Q9VC03-1</id>
        <name evidence="12">A</name>
        <sequence type="displayed"/>
    </isoform>
    <isoform>
        <id>Q9VC03-2</id>
        <name evidence="12">B</name>
        <sequence type="described" ref="VSP_062554 VSP_062555"/>
    </isoform>
    <isoform>
        <id>Q9VC03-3</id>
        <name evidence="12">C</name>
        <sequence type="described" ref="VSP_062553"/>
    </isoform>
    <isoform>
        <id>Q9VC03-4</id>
        <name evidence="12">D</name>
        <sequence type="described" ref="VSP_062553 VSP_062554 VSP_062555"/>
    </isoform>
    <text evidence="7">A number of isoforms are produced (PubMed:26616331). Alternative splicing produces 2 mRNAs, RA and RB (PubMed:26616331). Isoforms A and C are expressed from RA, with isoform C using the Met-32 alternative initiation codon (PubMed:26616331). Isoforms B and D are expressed from RB, with isoform D using the Met-32 alternative initiation codon (PubMed:26616331). Isoforms C and D are more efficiently expressed due to a highly efficient Kozak consensus sequence flanking the Met-32 alternative initiation codon (PubMed:26616331). Alternative splicing to produce RB is stimulated under stress in a cell type specific manner (PubMed:26616331). Under stress, neurons preferentially produce RB while glial cells produce RA (PubMed:26616331).</text>
</comment>
<comment type="tissue specificity">
    <text evidence="2">Abundantly expressed in neuronal and muscle cells (PubMed:17132048). Present at relatively low levels at the neuromuscular junction (PubMed:17132048). Expressed in the eye; present in photoreceptor cells and various neurons in the lamina cortex and medulla cortex and at low levels in the lamina (PubMed:17132048).</text>
</comment>
<comment type="induction">
    <text evidence="3 7">Overall expression and the relative expression of the alternatively spliced RB mRNA (encoding isoforms B and D) is increased by heat shock (acute stress) and proteotoxic stress (chronic stress).</text>
</comment>
<comment type="domain">
    <text evidence="3">The N-terminal region, which includes the putative catalytic motif, is not required for chaperone activity.</text>
</comment>
<comment type="domain">
    <text evidence="3">The C-terminal region, which includes a putative ATP binding motif, is required for efficient chaperone activity.</text>
</comment>
<comment type="disruption phenotype">
    <text evidence="2 5 6">Larval lethal at first instar stage (PubMed:17132048). Dendrites of the dorsal class IV neuron develop normally up to the first instar larval stage (PubMed:21596138). Sensory neurons in the ventral nerve cord display extensive axon fragmentation and near complete loss of axon termini (PubMed:21596138). RNAi-mediated knockdown in chemosensory neurons of the gustatory system in the wing, leg, and labellum results in wing neurons that develop normally up to eclosion but undergo rapid spontaneous degeneration in the first few days post eclosion characterized by loss of axonal mitochondria and axonal fragmentation that starts in the distal axons and progresses retrogradely towards the proximal axons (PubMed:22425156).</text>
</comment>
<comment type="similarity">
    <text evidence="1">Belongs to the eukaryotic NMN adenylyltransferase family.</text>
</comment>
<sequence length="389" mass="43796">MIVKISWPKNNITSECFRRFGSFKRRSKSKKMSAFIEETKSLLPRIAFIACGCFSPPTPMHLRMFEIAKDHFEMQGTHRVVGGIISPTHDSYGKKGLASALDRCAMVKLATQSSNWIRLSDWEVHQNQWMRTQAVLQHHQNYINNHINSGGGGGDDGENTHLPGWLPRGLHDSRDPVHLKLLCGADLLESFAVPGLWAEADIEDIVANHGLVVITRAGSNPGKFIFDSDILTKYQSNITLITNWVPNEVSSTLIRRLLGRGQSVKYLLDDLVLEYIKRQRLFNFKSKYITDAVRPNHLLFNHAYTDNNKNANSYSIGDQLEQDMDESDTPSPQLQHTPTSRVFCCGEVPLRGSKVLRSGPGQAVQVITMQADEKEESQAKKQKISQVQL</sequence>
<organism evidence="13">
    <name type="scientific">Drosophila melanogaster</name>
    <name type="common">Fruit fly</name>
    <dbReference type="NCBI Taxonomy" id="7227"/>
    <lineage>
        <taxon>Eukaryota</taxon>
        <taxon>Metazoa</taxon>
        <taxon>Ecdysozoa</taxon>
        <taxon>Arthropoda</taxon>
        <taxon>Hexapoda</taxon>
        <taxon>Insecta</taxon>
        <taxon>Pterygota</taxon>
        <taxon>Neoptera</taxon>
        <taxon>Endopterygota</taxon>
        <taxon>Diptera</taxon>
        <taxon>Brachycera</taxon>
        <taxon>Muscomorpha</taxon>
        <taxon>Ephydroidea</taxon>
        <taxon>Drosophilidae</taxon>
        <taxon>Drosophila</taxon>
        <taxon>Sophophora</taxon>
    </lineage>
</organism>
<accession>Q9VC03</accession>
<accession>A0A0B4KHH7</accession>
<accession>Q7KS06</accession>
<accession>Q8T405</accession>
<feature type="chain" id="PRO_0000462308" description="Nicotinamide-nucleotide adenylyltransferase">
    <location>
        <begin position="1"/>
        <end position="389"/>
    </location>
</feature>
<feature type="short sequence motif" description="Nuclear localization signal" evidence="7">
    <location>
        <begin position="380"/>
        <end position="383"/>
    </location>
</feature>
<feature type="splice variant" id="VSP_062553" description="In isoform C and isoform D.">
    <location>
        <begin position="1"/>
        <end position="31"/>
    </location>
</feature>
<feature type="splice variant" id="VSP_062554" description="In isoform B and isoform D.">
    <original>KYITDAVRPNH</original>
    <variation>RDAPAPTECDS</variation>
    <location>
        <begin position="287"/>
        <end position="297"/>
    </location>
</feature>
<feature type="splice variant" id="VSP_062555" description="In isoform B and isoform D.">
    <location>
        <begin position="298"/>
        <end position="389"/>
    </location>
</feature>
<feature type="mutagenesis site" description="Abolishes adenylyltransferase activity. Has no effect on chaperone activity." evidence="2 3">
    <original>H</original>
    <variation>A</variation>
    <location>
        <position position="61"/>
    </location>
</feature>
<feature type="mutagenesis site" description="Reduces adenylyltransferase activity; probably by disrupting substrate binding. Abolishes NMN adenylyltransferase activity; when associated with A-255. Has no effect on chaperone activity or on neuronal cell dendrite maintenance; when associated with A-255." evidence="2 3 5">
    <original>W</original>
    <variation>G</variation>
    <location>
        <position position="129"/>
    </location>
</feature>
<feature type="mutagenesis site" description="Reduces NMN adenylyltransferase activity; probably by disrupting substrate binding. Abolishes NMN adenylyltransferase activity; when associated with G-129. Has no effect on chaperone activity or on neuronal cell dendrite maintenance; when associated with G-129." evidence="2 3 5">
    <original>R</original>
    <variation>A</variation>
    <location>
        <position position="255"/>
    </location>
</feature>
<feature type="mutagenesis site" description="Switches localization from nuclear to cytoplasmic." evidence="7">
    <original>K</original>
    <variation>R</variation>
    <location>
        <position position="380"/>
    </location>
</feature>
<proteinExistence type="evidence at protein level"/>
<gene>
    <name evidence="8 12" type="primary">Nmnat</name>
    <name evidence="12" type="ORF">CG13645</name>
</gene>